<proteinExistence type="evidence at transcript level"/>
<sequence length="195" mass="20654">MEVESKTSFGGMESKSKEVKVVTGGKLRPFDLVLRVVALALTLVAAVLLGVDKQTKVVSLQLLPTLPPMDVPVTAKWRYLSAFVYFVVSNAIACSYAALSLLLSVGNSKGNKGLGLAITVMDLVMVALLFSSNGAAGAIGLMGYEGNSRVRWGKVCNVFGKFCNQVAVALGLSFFGGLAFFLLVVMAAFALNKRH</sequence>
<evidence type="ECO:0000250" key="1"/>
<evidence type="ECO:0000255" key="2"/>
<evidence type="ECO:0000305" key="3"/>
<protein>
    <recommendedName>
        <fullName>CASP-like protein 1E2</fullName>
        <shortName>VvCASPL1E2</shortName>
    </recommendedName>
</protein>
<gene>
    <name type="ordered locus">VIT_05s0020g01820</name>
    <name type="ORF">GSVIVT00019813001</name>
    <name type="ORF">GSVIVT01017795001</name>
    <name type="ORF">VIT_00017795001</name>
    <name type="ORF">Vv05s0020g01820</name>
</gene>
<organism>
    <name type="scientific">Vitis vinifera</name>
    <name type="common">Grape</name>
    <dbReference type="NCBI Taxonomy" id="29760"/>
    <lineage>
        <taxon>Eukaryota</taxon>
        <taxon>Viridiplantae</taxon>
        <taxon>Streptophyta</taxon>
        <taxon>Embryophyta</taxon>
        <taxon>Tracheophyta</taxon>
        <taxon>Spermatophyta</taxon>
        <taxon>Magnoliopsida</taxon>
        <taxon>eudicotyledons</taxon>
        <taxon>Gunneridae</taxon>
        <taxon>Pentapetalae</taxon>
        <taxon>rosids</taxon>
        <taxon>Vitales</taxon>
        <taxon>Vitaceae</taxon>
        <taxon>Viteae</taxon>
        <taxon>Vitis</taxon>
    </lineage>
</organism>
<feature type="chain" id="PRO_0000370305" description="CASP-like protein 1E2">
    <location>
        <begin position="1"/>
        <end position="195"/>
    </location>
</feature>
<feature type="topological domain" description="Cytoplasmic" evidence="2">
    <location>
        <begin position="1"/>
        <end position="29"/>
    </location>
</feature>
<feature type="transmembrane region" description="Helical" evidence="2">
    <location>
        <begin position="30"/>
        <end position="50"/>
    </location>
</feature>
<feature type="topological domain" description="Extracellular" evidence="2">
    <location>
        <begin position="51"/>
        <end position="82"/>
    </location>
</feature>
<feature type="transmembrane region" description="Helical" evidence="2">
    <location>
        <begin position="83"/>
        <end position="103"/>
    </location>
</feature>
<feature type="topological domain" description="Cytoplasmic" evidence="2">
    <location>
        <begin position="104"/>
        <end position="122"/>
    </location>
</feature>
<feature type="transmembrane region" description="Helical" evidence="2">
    <location>
        <begin position="123"/>
        <end position="143"/>
    </location>
</feature>
<feature type="topological domain" description="Extracellular" evidence="2">
    <location>
        <begin position="144"/>
        <end position="165"/>
    </location>
</feature>
<feature type="transmembrane region" description="Helical" evidence="2">
    <location>
        <begin position="166"/>
        <end position="186"/>
    </location>
</feature>
<feature type="topological domain" description="Cytoplasmic" evidence="2">
    <location>
        <begin position="187"/>
        <end position="195"/>
    </location>
</feature>
<dbReference type="EMBL" id="FN595749">
    <property type="protein sequence ID" value="CCB50342.1"/>
    <property type="molecule type" value="Genomic_DNA"/>
</dbReference>
<dbReference type="EMBL" id="FN597023">
    <property type="status" value="NOT_ANNOTATED_CDS"/>
    <property type="molecule type" value="Genomic_DNA"/>
</dbReference>
<dbReference type="EMBL" id="EE070589">
    <property type="status" value="NOT_ANNOTATED_CDS"/>
    <property type="molecule type" value="mRNA"/>
</dbReference>
<dbReference type="RefSeq" id="XP_002276206.1">
    <property type="nucleotide sequence ID" value="XM_002276170.4"/>
</dbReference>
<dbReference type="SMR" id="A7NW78"/>
<dbReference type="FunCoup" id="A7NW78">
    <property type="interactions" value="339"/>
</dbReference>
<dbReference type="STRING" id="29760.A7NW78"/>
<dbReference type="PaxDb" id="29760-VIT_05s0020g01820.t01"/>
<dbReference type="EnsemblPlants" id="Vitvi05g00349_t001">
    <property type="protein sequence ID" value="Vitvi05g00349_P001"/>
    <property type="gene ID" value="Vitvi05g00349"/>
</dbReference>
<dbReference type="Gramene" id="Vitvi05g00349_t001">
    <property type="protein sequence ID" value="Vitvi05g00349_P001"/>
    <property type="gene ID" value="Vitvi05g00349"/>
</dbReference>
<dbReference type="eggNOG" id="ENOG502RZNK">
    <property type="taxonomic scope" value="Eukaryota"/>
</dbReference>
<dbReference type="HOGENOM" id="CLU_066104_1_1_1"/>
<dbReference type="InParanoid" id="A7NW78"/>
<dbReference type="OrthoDB" id="1898688at2759"/>
<dbReference type="Proteomes" id="UP000009183">
    <property type="component" value="Chromosome 5"/>
</dbReference>
<dbReference type="Proteomes" id="UP000009183">
    <property type="component" value="Chromosome 5, unordered"/>
</dbReference>
<dbReference type="GO" id="GO:0005886">
    <property type="term" value="C:plasma membrane"/>
    <property type="evidence" value="ECO:0000318"/>
    <property type="project" value="GO_Central"/>
</dbReference>
<dbReference type="InterPro" id="IPR006459">
    <property type="entry name" value="CASP/CASPL"/>
</dbReference>
<dbReference type="InterPro" id="IPR006702">
    <property type="entry name" value="CASP_dom"/>
</dbReference>
<dbReference type="InterPro" id="IPR044173">
    <property type="entry name" value="CASPL"/>
</dbReference>
<dbReference type="NCBIfam" id="TIGR01569">
    <property type="entry name" value="A_tha_TIGR01569"/>
    <property type="match status" value="1"/>
</dbReference>
<dbReference type="PANTHER" id="PTHR36488">
    <property type="entry name" value="CASP-LIKE PROTEIN 1U1"/>
    <property type="match status" value="1"/>
</dbReference>
<dbReference type="PANTHER" id="PTHR36488:SF8">
    <property type="entry name" value="CASP-LIKE PROTEIN 1U1"/>
    <property type="match status" value="1"/>
</dbReference>
<dbReference type="Pfam" id="PF04535">
    <property type="entry name" value="CASP_dom"/>
    <property type="match status" value="1"/>
</dbReference>
<accession>A7NW78</accession>
<accession>F6HDH2</accession>
<name>CSPL5_VITVI</name>
<reference key="1">
    <citation type="journal article" date="2007" name="Nature">
        <title>The grapevine genome sequence suggests ancestral hexaploidization in major angiosperm phyla.</title>
        <authorList>
            <person name="Jaillon O."/>
            <person name="Aury J.-M."/>
            <person name="Noel B."/>
            <person name="Policriti A."/>
            <person name="Clepet C."/>
            <person name="Casagrande A."/>
            <person name="Choisne N."/>
            <person name="Aubourg S."/>
            <person name="Vitulo N."/>
            <person name="Jubin C."/>
            <person name="Vezzi A."/>
            <person name="Legeai F."/>
            <person name="Hugueney P."/>
            <person name="Dasilva C."/>
            <person name="Horner D."/>
            <person name="Mica E."/>
            <person name="Jublot D."/>
            <person name="Poulain J."/>
            <person name="Bruyere C."/>
            <person name="Billault A."/>
            <person name="Segurens B."/>
            <person name="Gouyvenoux M."/>
            <person name="Ugarte E."/>
            <person name="Cattonaro F."/>
            <person name="Anthouard V."/>
            <person name="Vico V."/>
            <person name="Del Fabbro C."/>
            <person name="Alaux M."/>
            <person name="Di Gaspero G."/>
            <person name="Dumas V."/>
            <person name="Felice N."/>
            <person name="Paillard S."/>
            <person name="Juman I."/>
            <person name="Moroldo M."/>
            <person name="Scalabrin S."/>
            <person name="Canaguier A."/>
            <person name="Le Clainche I."/>
            <person name="Malacrida G."/>
            <person name="Durand E."/>
            <person name="Pesole G."/>
            <person name="Laucou V."/>
            <person name="Chatelet P."/>
            <person name="Merdinoglu D."/>
            <person name="Delledonne M."/>
            <person name="Pezzotti M."/>
            <person name="Lecharny A."/>
            <person name="Scarpelli C."/>
            <person name="Artiguenave F."/>
            <person name="Pe M.E."/>
            <person name="Valle G."/>
            <person name="Morgante M."/>
            <person name="Caboche M."/>
            <person name="Adam-Blondon A.-F."/>
            <person name="Weissenbach J."/>
            <person name="Quetier F."/>
            <person name="Wincker P."/>
        </authorList>
    </citation>
    <scope>NUCLEOTIDE SEQUENCE [LARGE SCALE GENOMIC DNA]</scope>
    <source>
        <strain>cv. Pinot noir / PN40024</strain>
    </source>
</reference>
<reference key="2">
    <citation type="submission" date="2006-07" db="EMBL/GenBank/DDBJ databases">
        <title>EST sequences from Thompson-seedless and Carmenere.</title>
        <authorList>
            <person name="Pena-Cortes H."/>
            <person name="Cuadros A."/>
            <person name="Ramirez I."/>
            <person name="Dorta F."/>
            <person name="Pinto M."/>
            <person name="Riquelme A."/>
            <person name="Fichet T."/>
            <person name="Prieto H."/>
            <person name="Rosales M."/>
            <person name="Hinrichsen P."/>
            <person name="Gonzalez E."/>
            <person name="Poblete F."/>
            <person name="Ruiz S."/>
        </authorList>
    </citation>
    <scope>NUCLEOTIDE SEQUENCE [LARGE SCALE MRNA]</scope>
    <source>
        <strain>cv. Carmenere</strain>
    </source>
</reference>
<reference key="3">
    <citation type="journal article" date="2014" name="Plant Physiol.">
        <title>Functional and evolutionary analysis of the CASPARIAN STRIP MEMBRANE DOMAIN PROTEIN family.</title>
        <authorList>
            <person name="Roppolo D."/>
            <person name="Boeckmann B."/>
            <person name="Pfister A."/>
            <person name="Boutet E."/>
            <person name="Rubio M.C."/>
            <person name="Denervaud-Tendon V."/>
            <person name="Vermeer J.E."/>
            <person name="Gheyselinck J."/>
            <person name="Xenarios I."/>
            <person name="Geldner N."/>
        </authorList>
    </citation>
    <scope>GENE FAMILY</scope>
    <scope>NOMENCLATURE</scope>
</reference>
<keyword id="KW-1003">Cell membrane</keyword>
<keyword id="KW-0472">Membrane</keyword>
<keyword id="KW-1185">Reference proteome</keyword>
<keyword id="KW-0812">Transmembrane</keyword>
<keyword id="KW-1133">Transmembrane helix</keyword>
<comment type="subunit">
    <text evidence="1">Homodimer and heterodimers.</text>
</comment>
<comment type="subcellular location">
    <subcellularLocation>
        <location evidence="1">Cell membrane</location>
        <topology evidence="1">Multi-pass membrane protein</topology>
    </subcellularLocation>
</comment>
<comment type="similarity">
    <text evidence="3">Belongs to the Casparian strip membrane proteins (CASP) family.</text>
</comment>